<sequence>MSCYSSILNSISTLAFLQVASNVIELVRHCIMHFCETRIRCNTLAFVILKILITMVIYFMIGLGLFYLAKNGTEAE</sequence>
<accession>Q9J560</accession>
<comment type="function">
    <text evidence="1">Envelope protein. Required for an early step in virion morphogenesis (By similarity).</text>
</comment>
<comment type="subcellular location">
    <subcellularLocation>
        <location evidence="1">Virion membrane</location>
        <topology evidence="1">Single-pass membrane protein</topology>
    </subcellularLocation>
    <subcellularLocation>
        <location evidence="1">Host cytoplasm</location>
    </subcellularLocation>
    <text evidence="1">Component of the mature virion (MV) membrane. The mature virion is located in the cytoplasm of infected cells and is probably released by cell lysis. Also found in cytoplasmic virus factories (By similarity).</text>
</comment>
<comment type="induction">
    <text>Expressed in the late phase of the viral replicative cycle.</text>
</comment>
<comment type="similarity">
    <text evidence="3">Belongs to the chordopoxvirinae A9 family.</text>
</comment>
<reference key="1">
    <citation type="journal article" date="2000" name="J. Virol.">
        <title>The genome of fowlpox virus.</title>
        <authorList>
            <person name="Afonso C.L."/>
            <person name="Tulman E.R."/>
            <person name="Lu Z."/>
            <person name="Zsak L."/>
            <person name="Kutish G.F."/>
            <person name="Rock D.L."/>
        </authorList>
    </citation>
    <scope>NUCLEOTIDE SEQUENCE [LARGE SCALE GENOMIC DNA]</scope>
</reference>
<dbReference type="EMBL" id="AF198100">
    <property type="protein sequence ID" value="AAF44517.1"/>
    <property type="molecule type" value="Genomic_DNA"/>
</dbReference>
<dbReference type="RefSeq" id="NP_039136.1">
    <property type="nucleotide sequence ID" value="NC_002188.1"/>
</dbReference>
<dbReference type="SMR" id="Q9J560"/>
<dbReference type="GeneID" id="1486721"/>
<dbReference type="KEGG" id="vg:1486721"/>
<dbReference type="Proteomes" id="UP000008597">
    <property type="component" value="Segment"/>
</dbReference>
<dbReference type="GO" id="GO:0030430">
    <property type="term" value="C:host cell cytoplasm"/>
    <property type="evidence" value="ECO:0007669"/>
    <property type="project" value="UniProtKB-SubCell"/>
</dbReference>
<dbReference type="GO" id="GO:0016020">
    <property type="term" value="C:membrane"/>
    <property type="evidence" value="ECO:0007669"/>
    <property type="project" value="UniProtKB-KW"/>
</dbReference>
<dbReference type="GO" id="GO:0019031">
    <property type="term" value="C:viral envelope"/>
    <property type="evidence" value="ECO:0007669"/>
    <property type="project" value="UniProtKB-KW"/>
</dbReference>
<dbReference type="GO" id="GO:0055036">
    <property type="term" value="C:virion membrane"/>
    <property type="evidence" value="ECO:0007669"/>
    <property type="project" value="UniProtKB-SubCell"/>
</dbReference>
<dbReference type="InterPro" id="IPR006920">
    <property type="entry name" value="Poxvirus_A9"/>
</dbReference>
<dbReference type="Pfam" id="PF04835">
    <property type="entry name" value="Pox_A9"/>
    <property type="match status" value="1"/>
</dbReference>
<gene>
    <name type="ordered locus">FPV173</name>
</gene>
<keyword id="KW-0325">Glycoprotein</keyword>
<keyword id="KW-1035">Host cytoplasm</keyword>
<keyword id="KW-0426">Late protein</keyword>
<keyword id="KW-0472">Membrane</keyword>
<keyword id="KW-1185">Reference proteome</keyword>
<keyword id="KW-0732">Signal</keyword>
<keyword id="KW-0812">Transmembrane</keyword>
<keyword id="KW-1133">Transmembrane helix</keyword>
<keyword id="KW-0261">Viral envelope protein</keyword>
<keyword id="KW-0946">Virion</keyword>
<evidence type="ECO:0000250" key="1"/>
<evidence type="ECO:0000255" key="2"/>
<evidence type="ECO:0000305" key="3"/>
<proteinExistence type="evidence at transcript level"/>
<protein>
    <recommendedName>
        <fullName>Protein A9 homolog</fullName>
    </recommendedName>
</protein>
<name>A9_FOWPN</name>
<feature type="signal peptide" evidence="2">
    <location>
        <begin position="1"/>
        <end position="21"/>
    </location>
</feature>
<feature type="chain" id="PRO_0000099229" description="Protein A9 homolog">
    <location>
        <begin position="22"/>
        <end position="76"/>
    </location>
</feature>
<feature type="topological domain" description="Intravirion" evidence="2">
    <location>
        <begin position="23"/>
        <end position="45"/>
    </location>
</feature>
<feature type="transmembrane region" description="Helical" evidence="2">
    <location>
        <begin position="46"/>
        <end position="66"/>
    </location>
</feature>
<feature type="topological domain" description="Virion surface" evidence="2">
    <location>
        <begin position="67"/>
        <end position="76"/>
    </location>
</feature>
<feature type="glycosylation site" description="N-linked (GlcNAc...) asparagine; by host" evidence="2">
    <location>
        <position position="71"/>
    </location>
</feature>
<organism>
    <name type="scientific">Fowlpox virus (strain NVSL)</name>
    <name type="common">FPV</name>
    <dbReference type="NCBI Taxonomy" id="928301"/>
    <lineage>
        <taxon>Viruses</taxon>
        <taxon>Varidnaviria</taxon>
        <taxon>Bamfordvirae</taxon>
        <taxon>Nucleocytoviricota</taxon>
        <taxon>Pokkesviricetes</taxon>
        <taxon>Chitovirales</taxon>
        <taxon>Poxviridae</taxon>
        <taxon>Chordopoxvirinae</taxon>
        <taxon>Avipoxvirus</taxon>
        <taxon>Fowlpox virus</taxon>
    </lineage>
</organism>
<organismHost>
    <name type="scientific">Vertebrata</name>
    <dbReference type="NCBI Taxonomy" id="7742"/>
</organismHost>